<keyword id="KW-0037">Angiogenesis</keyword>
<keyword id="KW-1003">Cell membrane</keyword>
<keyword id="KW-1015">Disulfide bond</keyword>
<keyword id="KW-0325">Glycoprotein</keyword>
<keyword id="KW-0336">GPI-anchor</keyword>
<keyword id="KW-0449">Lipoprotein</keyword>
<keyword id="KW-0472">Membrane</keyword>
<keyword id="KW-1185">Reference proteome</keyword>
<keyword id="KW-0964">Secreted</keyword>
<keyword id="KW-0732">Signal</keyword>
<keyword id="KW-0043">Tumor suppressor</keyword>
<proteinExistence type="evidence at protein level"/>
<organism>
    <name type="scientific">Mus musculus</name>
    <name type="common">Mouse</name>
    <dbReference type="NCBI Taxonomy" id="10090"/>
    <lineage>
        <taxon>Eukaryota</taxon>
        <taxon>Metazoa</taxon>
        <taxon>Chordata</taxon>
        <taxon>Craniata</taxon>
        <taxon>Vertebrata</taxon>
        <taxon>Euteleostomi</taxon>
        <taxon>Mammalia</taxon>
        <taxon>Eutheria</taxon>
        <taxon>Euarchontoglires</taxon>
        <taxon>Glires</taxon>
        <taxon>Rodentia</taxon>
        <taxon>Myomorpha</taxon>
        <taxon>Muroidea</taxon>
        <taxon>Muridae</taxon>
        <taxon>Murinae</taxon>
        <taxon>Mus</taxon>
        <taxon>Mus</taxon>
    </lineage>
</organism>
<name>EFNA1_MOUSE</name>
<reference key="1">
    <citation type="journal article" date="1995" name="Oncogene">
        <title>Molecular cloning and expression of rat and mouse B61 gene: implications on organogenesis.</title>
        <authorList>
            <person name="Takahashi H."/>
            <person name="Ikeda T."/>
        </authorList>
    </citation>
    <scope>NUCLEOTIDE SEQUENCE [MRNA]</scope>
    <source>
        <strain>ICR</strain>
    </source>
</reference>
<reference key="2">
    <citation type="submission" date="1995-05" db="EMBL/GenBank/DDBJ databases">
        <authorList>
            <person name="Morris J.C."/>
            <person name="Ciarletta A."/>
            <person name="Morris G.E."/>
            <person name="Giannotti J."/>
            <person name="Caruso A."/>
            <person name="Hammett D.J."/>
            <person name="Finnerty H."/>
            <person name="Turner K."/>
            <person name="Wood C.R."/>
        </authorList>
    </citation>
    <scope>NUCLEOTIDE SEQUENCE [MRNA]</scope>
    <source>
        <strain>BALB/cJ</strain>
    </source>
</reference>
<reference key="3">
    <citation type="journal article" date="1996" name="Dev. Biol.">
        <title>Distinct and overlapping expression patterns of ligands for Eph-related receptor tyrosine kinases during mouse embryogenesis.</title>
        <authorList>
            <person name="Flenniken A.M."/>
            <person name="Gale N.W."/>
            <person name="Yancopoulos G.D."/>
            <person name="Wilkinson D.G."/>
        </authorList>
    </citation>
    <scope>NUCLEOTIDE SEQUENCE [MRNA]</scope>
</reference>
<reference key="4">
    <citation type="journal article" date="2004" name="Genome Res.">
        <title>The status, quality, and expansion of the NIH full-length cDNA project: the Mammalian Gene Collection (MGC).</title>
        <authorList>
            <consortium name="The MGC Project Team"/>
        </authorList>
    </citation>
    <scope>NUCLEOTIDE SEQUENCE [LARGE SCALE MRNA]</scope>
    <source>
        <strain>C57BL/6J</strain>
        <tissue>Mammary gland</tissue>
    </source>
</reference>
<reference key="5">
    <citation type="journal article" date="2006" name="Mol. Cell. Biol.">
        <title>Essential role of Vav family guanine nucleotide exchange factors in EphA receptor-mediated angiogenesis.</title>
        <authorList>
            <person name="Hunter S.G."/>
            <person name="Zhuang G."/>
            <person name="Brantley-Sieders D.M."/>
            <person name="Swat W."/>
            <person name="Cowan C.W."/>
            <person name="Chen J."/>
        </authorList>
    </citation>
    <scope>FUNCTION</scope>
</reference>
<reference key="6">
    <citation type="journal article" date="2007" name="Nat. Neurosci.">
        <title>Cdk5 regulates EphA4-mediated dendritic spine retraction through an ephexin1-dependent mechanism.</title>
        <authorList>
            <person name="Fu W.Y."/>
            <person name="Chen Y."/>
            <person name="Sahin M."/>
            <person name="Zhao X.S."/>
            <person name="Shi L."/>
            <person name="Bikoff J.B."/>
            <person name="Lai K.O."/>
            <person name="Yung W.H."/>
            <person name="Fu A.K."/>
            <person name="Greenberg M.E."/>
            <person name="Ip N.Y."/>
        </authorList>
    </citation>
    <scope>FUNCTION IN DENDRITIC SPINE MORPHOGENESIS</scope>
</reference>
<reference key="7">
    <citation type="journal article" date="2008" name="J. Biol. Chem.">
        <title>Identification and functional analysis of phosphorylated tyrosine residues within EphA2 receptor tyrosine kinase.</title>
        <authorList>
            <person name="Fang W.B."/>
            <person name="Brantley-Sieders D.M."/>
            <person name="Hwang Y."/>
            <person name="Ham A.-J.L."/>
            <person name="Chen J."/>
        </authorList>
    </citation>
    <scope>FUNCTION</scope>
</reference>
<reference key="8">
    <citation type="journal article" date="2016" name="Front. Cell Dev. Biol.">
        <title>Gene expression profiling of muscle stem cells identifies novel regulators of postnatal myogenesis.</title>
        <authorList>
            <person name="Alonso-Martin S."/>
            <person name="Rochat A."/>
            <person name="Mademtzoglou D."/>
            <person name="Morais J."/>
            <person name="de Reynies A."/>
            <person name="Aurade F."/>
            <person name="Chang T.H."/>
            <person name="Zammit P.S."/>
            <person name="Relaix F."/>
        </authorList>
    </citation>
    <scope>DEVELOPMENTAL STAGE</scope>
    <scope>TISSUE SPECIFICITY</scope>
</reference>
<evidence type="ECO:0000250" key="1"/>
<evidence type="ECO:0000250" key="2">
    <source>
        <dbReference type="UniProtKB" id="P20827"/>
    </source>
</evidence>
<evidence type="ECO:0000255" key="3"/>
<evidence type="ECO:0000255" key="4">
    <source>
        <dbReference type="PROSITE-ProRule" id="PRU00884"/>
    </source>
</evidence>
<evidence type="ECO:0000269" key="5">
    <source>
    </source>
</evidence>
<evidence type="ECO:0000269" key="6">
    <source>
    </source>
</evidence>
<evidence type="ECO:0000269" key="7">
    <source>
    </source>
</evidence>
<evidence type="ECO:0000269" key="8">
    <source>
    </source>
</evidence>
<evidence type="ECO:0000305" key="9"/>
<comment type="function">
    <text evidence="5 6 7">Cell surface GPI-bound ligand for Eph receptors, a family of receptor tyrosine kinases which are crucial for migration, repulsion and adhesion during neuronal, vascular and epithelial development. Binds promiscuously Eph receptors residing on adjacent cells, leading to contact-dependent bidirectional signaling into neighboring cells. Plays an important role in angiogenesis and tumor neovascularization. The recruitment of VAV2, VAV3 and PI3-kinase p85 subunit by phosphorylated EPHA2 is critical for EFNA1-induced RAC1 GTPase activation and vascular endothelial cell migration and assembly. Exerts anti-oncogenic effects in tumor cells through activation and down-regulation of EPHA2. Activates EPHA2 by inducing tyrosine phosphorylation which leads to its internalization and degradation. Acts as a negative regulator in the tumorigenesis of gliomas by down-regulating EPHA2 and FAK. Can evoke collapse of embryonic neuronal growth cone and regulates dendritic spine morphogenesis.</text>
</comment>
<comment type="subunit">
    <text evidence="1">Monomer. Homodimer. Forms heterodimers with EPHA2. Binds to the receptor tyrosine kinases EPHA2, EPHA3, EPHA4, EPHA5, EPHA6 and EPHA7. Also binds with low affinity to EPHA1 (By similarity).</text>
</comment>
<comment type="interaction">
    <interactant intactId="EBI-5241529">
        <id>P52793</id>
    </interactant>
    <interactant intactId="EBI-1383428">
        <id>Q15375</id>
        <label>EPHA7</label>
    </interactant>
    <organismsDiffer>true</organismsDiffer>
    <experiments>2</experiments>
</comment>
<comment type="subcellular location">
    <subcellularLocation>
        <location evidence="2">Cell membrane</location>
        <topology evidence="2">Lipid-anchor</topology>
        <topology evidence="2">GPI-anchor</topology>
    </subcellularLocation>
</comment>
<comment type="subcellular location">
    <molecule>Ephrin-A1, secreted form</molecule>
    <subcellularLocation>
        <location evidence="2">Secreted</location>
    </subcellularLocation>
</comment>
<comment type="tissue specificity">
    <text evidence="8">Expressed in myogenic progenitor cells.</text>
</comment>
<comment type="developmental stage">
    <text evidence="8">In myogenic progenitor cells, expressed during the acquisition of muscle stem cell properties, from 18.5 dpc to adulthood.</text>
</comment>
<comment type="PTM">
    <text evidence="1">Undergoes proteolysis by a metalloprotease to give rise to a soluble monomeric form.</text>
</comment>
<comment type="PTM">
    <text evidence="2">N-Glycosylation is required for binding to EPHA2 receptor and inducing its internalization.</text>
</comment>
<comment type="similarity">
    <text evidence="4">Belongs to the ephrin family.</text>
</comment>
<gene>
    <name type="primary">Efna1</name>
    <name type="synonym">Epgl1</name>
    <name type="synonym">Epl1</name>
    <name type="synonym">Lerk1</name>
</gene>
<sequence length="205" mass="23802">MEFLWAPLLGLCCSLAAADRHIVFWNSSNPKFREEDYTVHVQLNDYLDIICPHYEDDSVADAAMERYTLYMVEHQEYVACQPQSKDQVRWNCNRPSAKHGPEKLSEKFQRFTPFILGKEFKEGHSYYYISKPIYHQESQCLKLKVTVNGKITHNPQAHVNPQEKRLQADDPEVQVLHSIGYSAAPRLFPLVWAVLLLPLLLLQSQ</sequence>
<feature type="signal peptide" evidence="3">
    <location>
        <begin position="1"/>
        <end position="17"/>
    </location>
</feature>
<feature type="chain" id="PRO_0000008355" description="Ephrin-A1">
    <location>
        <begin position="18"/>
        <end position="182"/>
    </location>
</feature>
<feature type="chain" id="PRO_0000389631" description="Ephrin-A1, secreted form">
    <location>
        <begin position="18"/>
        <end status="unknown"/>
    </location>
</feature>
<feature type="propeptide" id="PRO_0000008356" description="Removed in mature form" evidence="3">
    <location>
        <begin position="183"/>
        <end position="205"/>
    </location>
</feature>
<feature type="domain" description="Ephrin RBD" evidence="4">
    <location>
        <begin position="18"/>
        <end position="161"/>
    </location>
</feature>
<feature type="lipid moiety-binding region" description="GPI-anchor amidated serine" evidence="3">
    <location>
        <position position="182"/>
    </location>
</feature>
<feature type="glycosylation site" description="N-linked (GlcNAc...) asparagine" evidence="3">
    <location>
        <position position="26"/>
    </location>
</feature>
<feature type="disulfide bond" evidence="4">
    <location>
        <begin position="51"/>
        <end position="92"/>
    </location>
</feature>
<feature type="disulfide bond" evidence="4">
    <location>
        <begin position="80"/>
        <end position="140"/>
    </location>
</feature>
<feature type="sequence conflict" description="In Ref. 1; BAA07344." evidence="9" ref="1">
    <original>H</original>
    <variation>Y</variation>
    <location>
        <position position="74"/>
    </location>
</feature>
<feature type="sequence conflict" description="In Ref. 1; BAA07344." evidence="9" ref="1">
    <original>A</original>
    <variation>T</variation>
    <location>
        <position position="79"/>
    </location>
</feature>
<feature type="sequence conflict" description="In Ref. 1; BAA07344." evidence="9" ref="1">
    <original>Q</original>
    <variation>E</variation>
    <location>
        <position position="81"/>
    </location>
</feature>
<feature type="sequence conflict" description="In Ref. 1; BAA07344." evidence="9" ref="1">
    <original>N</original>
    <variation>K</variation>
    <location>
        <position position="91"/>
    </location>
</feature>
<feature type="sequence conflict" description="In Ref. 1; BAA07344." evidence="9" ref="1">
    <original>R</original>
    <variation>Q</variation>
    <location>
        <position position="94"/>
    </location>
</feature>
<feature type="sequence conflict" description="In Ref. 1; BAA07344." evidence="9" ref="1">
    <original>T</original>
    <variation>S</variation>
    <location>
        <position position="112"/>
    </location>
</feature>
<feature type="sequence conflict" description="In Ref. 1; BAA07344." evidence="9" ref="1">
    <original>I</original>
    <variation>T</variation>
    <location>
        <position position="115"/>
    </location>
</feature>
<feature type="sequence conflict" description="In Ref. 1; BAA07344." evidence="9" ref="1">
    <original>S</original>
    <variation>T</variation>
    <location>
        <position position="138"/>
    </location>
</feature>
<feature type="sequence conflict" description="In Ref. 1; BAA07344." evidence="9" ref="1">
    <original>N</original>
    <variation>S</variation>
    <location>
        <position position="154"/>
    </location>
</feature>
<feature type="sequence conflict" description="In Ref. 1; BAA07344." evidence="9" ref="1">
    <original>Q</original>
    <variation>H</variation>
    <location>
        <position position="156"/>
    </location>
</feature>
<feature type="sequence conflict" description="In Ref. 1; BAA07344." evidence="9" ref="1">
    <original>V</original>
    <variation>A</variation>
    <location>
        <position position="159"/>
    </location>
</feature>
<feature type="sequence conflict" description="In Ref. 1; BAA07344." evidence="9" ref="1">
    <original>Y</original>
    <variation>H</variation>
    <location>
        <position position="181"/>
    </location>
</feature>
<feature type="sequence conflict" description="In Ref. 1; BAA07344." evidence="9" ref="1">
    <original>S</original>
    <variation>T</variation>
    <location>
        <position position="204"/>
    </location>
</feature>
<dbReference type="EMBL" id="D38146">
    <property type="protein sequence ID" value="BAA07344.1"/>
    <property type="molecule type" value="mRNA"/>
</dbReference>
<dbReference type="EMBL" id="U26188">
    <property type="protein sequence ID" value="AAA67563.1"/>
    <property type="molecule type" value="mRNA"/>
</dbReference>
<dbReference type="EMBL" id="U90662">
    <property type="protein sequence ID" value="AAB50237.1"/>
    <property type="molecule type" value="mRNA"/>
</dbReference>
<dbReference type="EMBL" id="BC002046">
    <property type="protein sequence ID" value="AAH02046.1"/>
    <property type="molecule type" value="mRNA"/>
</dbReference>
<dbReference type="CCDS" id="CCDS17501.1"/>
<dbReference type="RefSeq" id="NP_034237.3">
    <property type="nucleotide sequence ID" value="NM_010107.4"/>
</dbReference>
<dbReference type="SMR" id="P52793"/>
<dbReference type="BioGRID" id="199389">
    <property type="interactions" value="3"/>
</dbReference>
<dbReference type="FunCoup" id="P52793">
    <property type="interactions" value="1461"/>
</dbReference>
<dbReference type="IntAct" id="P52793">
    <property type="interactions" value="1"/>
</dbReference>
<dbReference type="STRING" id="10090.ENSMUSP00000029566"/>
<dbReference type="GlyConnect" id="2290">
    <property type="glycosylation" value="4 N-Linked glycans (1 site)"/>
</dbReference>
<dbReference type="GlyCosmos" id="P52793">
    <property type="glycosylation" value="1 site, 4 glycans"/>
</dbReference>
<dbReference type="GlyGen" id="P52793">
    <property type="glycosylation" value="1 site, 5 N-linked glycans (1 site)"/>
</dbReference>
<dbReference type="iPTMnet" id="P52793"/>
<dbReference type="PhosphoSitePlus" id="P52793"/>
<dbReference type="CPTAC" id="non-CPTAC-3975"/>
<dbReference type="PaxDb" id="10090-ENSMUSP00000029566"/>
<dbReference type="ProteomicsDB" id="277767"/>
<dbReference type="Pumba" id="P52793"/>
<dbReference type="ABCD" id="P52793">
    <property type="antibodies" value="11 sequenced antibodies"/>
</dbReference>
<dbReference type="Antibodypedia" id="34167">
    <property type="antibodies" value="389 antibodies from 37 providers"/>
</dbReference>
<dbReference type="DNASU" id="13636"/>
<dbReference type="Ensembl" id="ENSMUST00000029566.9">
    <property type="protein sequence ID" value="ENSMUSP00000029566.3"/>
    <property type="gene ID" value="ENSMUSG00000027954.10"/>
</dbReference>
<dbReference type="GeneID" id="13636"/>
<dbReference type="KEGG" id="mmu:13636"/>
<dbReference type="UCSC" id="uc008pyo.2">
    <property type="organism name" value="mouse"/>
</dbReference>
<dbReference type="AGR" id="MGI:103236"/>
<dbReference type="CTD" id="1942"/>
<dbReference type="MGI" id="MGI:103236">
    <property type="gene designation" value="Efna1"/>
</dbReference>
<dbReference type="VEuPathDB" id="HostDB:ENSMUSG00000027954"/>
<dbReference type="eggNOG" id="KOG3858">
    <property type="taxonomic scope" value="Eukaryota"/>
</dbReference>
<dbReference type="GeneTree" id="ENSGT00940000159919"/>
<dbReference type="HOGENOM" id="CLU_081598_2_0_1"/>
<dbReference type="InParanoid" id="P52793"/>
<dbReference type="OMA" id="QRHTVFW"/>
<dbReference type="OrthoDB" id="8774972at2759"/>
<dbReference type="PhylomeDB" id="P52793"/>
<dbReference type="Reactome" id="R-MMU-2682334">
    <property type="pathway name" value="EPH-Ephrin signaling"/>
</dbReference>
<dbReference type="Reactome" id="R-MMU-3928663">
    <property type="pathway name" value="EPHA-mediated growth cone collapse"/>
</dbReference>
<dbReference type="Reactome" id="R-MMU-3928665">
    <property type="pathway name" value="EPH-ephrin mediated repulsion of cells"/>
</dbReference>
<dbReference type="BioGRID-ORCS" id="13636">
    <property type="hits" value="5 hits in 77 CRISPR screens"/>
</dbReference>
<dbReference type="ChiTaRS" id="Efna1">
    <property type="organism name" value="mouse"/>
</dbReference>
<dbReference type="PRO" id="PR:P52793"/>
<dbReference type="Proteomes" id="UP000000589">
    <property type="component" value="Chromosome 3"/>
</dbReference>
<dbReference type="RNAct" id="P52793">
    <property type="molecule type" value="protein"/>
</dbReference>
<dbReference type="Bgee" id="ENSMUSG00000027954">
    <property type="expression patterns" value="Expressed in placenta labyrinth and 251 other cell types or tissues"/>
</dbReference>
<dbReference type="ExpressionAtlas" id="P52793">
    <property type="expression patterns" value="baseline and differential"/>
</dbReference>
<dbReference type="GO" id="GO:0005576">
    <property type="term" value="C:extracellular region"/>
    <property type="evidence" value="ECO:0007669"/>
    <property type="project" value="UniProtKB-SubCell"/>
</dbReference>
<dbReference type="GO" id="GO:0005886">
    <property type="term" value="C:plasma membrane"/>
    <property type="evidence" value="ECO:0000314"/>
    <property type="project" value="UniProtKB"/>
</dbReference>
<dbReference type="GO" id="GO:0098552">
    <property type="term" value="C:side of membrane"/>
    <property type="evidence" value="ECO:0007669"/>
    <property type="project" value="UniProtKB-KW"/>
</dbReference>
<dbReference type="GO" id="GO:0046875">
    <property type="term" value="F:ephrin receptor binding"/>
    <property type="evidence" value="ECO:0000353"/>
    <property type="project" value="ARUK-UCL"/>
</dbReference>
<dbReference type="GO" id="GO:0001525">
    <property type="term" value="P:angiogenesis"/>
    <property type="evidence" value="ECO:0007669"/>
    <property type="project" value="UniProtKB-KW"/>
</dbReference>
<dbReference type="GO" id="GO:0003180">
    <property type="term" value="P:aortic valve morphogenesis"/>
    <property type="evidence" value="ECO:0000315"/>
    <property type="project" value="BHF-UCL"/>
</dbReference>
<dbReference type="GO" id="GO:0016477">
    <property type="term" value="P:cell migration"/>
    <property type="evidence" value="ECO:0007669"/>
    <property type="project" value="Ensembl"/>
</dbReference>
<dbReference type="GO" id="GO:0021953">
    <property type="term" value="P:central nervous system neuron differentiation"/>
    <property type="evidence" value="ECO:0000314"/>
    <property type="project" value="MGI"/>
</dbReference>
<dbReference type="GO" id="GO:0003199">
    <property type="term" value="P:endocardial cushion to mesenchymal transition involved in heart valve formation"/>
    <property type="evidence" value="ECO:0000315"/>
    <property type="project" value="BHF-UCL"/>
</dbReference>
<dbReference type="GO" id="GO:0048013">
    <property type="term" value="P:ephrin receptor signaling pathway"/>
    <property type="evidence" value="ECO:0000314"/>
    <property type="project" value="UniProtKB"/>
</dbReference>
<dbReference type="GO" id="GO:0003183">
    <property type="term" value="P:mitral valve morphogenesis"/>
    <property type="evidence" value="ECO:0000315"/>
    <property type="project" value="BHF-UCL"/>
</dbReference>
<dbReference type="GO" id="GO:0061002">
    <property type="term" value="P:negative regulation of dendritic spine morphogenesis"/>
    <property type="evidence" value="ECO:0000314"/>
    <property type="project" value="UniProtKB"/>
</dbReference>
<dbReference type="GO" id="GO:0010719">
    <property type="term" value="P:negative regulation of epithelial to mesenchymal transition"/>
    <property type="evidence" value="ECO:0000315"/>
    <property type="project" value="BHF-UCL"/>
</dbReference>
<dbReference type="GO" id="GO:0043409">
    <property type="term" value="P:negative regulation of MAPK cascade"/>
    <property type="evidence" value="ECO:0000314"/>
    <property type="project" value="MGI"/>
</dbReference>
<dbReference type="GO" id="GO:1903051">
    <property type="term" value="P:negative regulation of proteolysis involved in protein catabolic process"/>
    <property type="evidence" value="ECO:0007669"/>
    <property type="project" value="Ensembl"/>
</dbReference>
<dbReference type="GO" id="GO:0070244">
    <property type="term" value="P:negative regulation of thymocyte apoptotic process"/>
    <property type="evidence" value="ECO:0000314"/>
    <property type="project" value="MGI"/>
</dbReference>
<dbReference type="GO" id="GO:0000122">
    <property type="term" value="P:negative regulation of transcription by RNA polymerase II"/>
    <property type="evidence" value="ECO:0000315"/>
    <property type="project" value="BHF-UCL"/>
</dbReference>
<dbReference type="GO" id="GO:0014028">
    <property type="term" value="P:notochord formation"/>
    <property type="evidence" value="ECO:0000316"/>
    <property type="project" value="MGI"/>
</dbReference>
<dbReference type="GO" id="GO:1902004">
    <property type="term" value="P:positive regulation of amyloid-beta formation"/>
    <property type="evidence" value="ECO:0007669"/>
    <property type="project" value="Ensembl"/>
</dbReference>
<dbReference type="GO" id="GO:0043410">
    <property type="term" value="P:positive regulation of MAPK cascade"/>
    <property type="evidence" value="ECO:0000314"/>
    <property type="project" value="MGI"/>
</dbReference>
<dbReference type="GO" id="GO:0050821">
    <property type="term" value="P:protein stabilization"/>
    <property type="evidence" value="ECO:0007669"/>
    <property type="project" value="Ensembl"/>
</dbReference>
<dbReference type="GO" id="GO:0045765">
    <property type="term" value="P:regulation of angiogenesis"/>
    <property type="evidence" value="ECO:0000314"/>
    <property type="project" value="UniProtKB"/>
</dbReference>
<dbReference type="GO" id="GO:0050770">
    <property type="term" value="P:regulation of axonogenesis"/>
    <property type="evidence" value="ECO:0000314"/>
    <property type="project" value="MGI"/>
</dbReference>
<dbReference type="GO" id="GO:0043535">
    <property type="term" value="P:regulation of blood vessel endothelial cell migration"/>
    <property type="evidence" value="ECO:0000314"/>
    <property type="project" value="UniProtKB"/>
</dbReference>
<dbReference type="GO" id="GO:0033628">
    <property type="term" value="P:regulation of cell adhesion mediated by integrin"/>
    <property type="evidence" value="ECO:0007669"/>
    <property type="project" value="Ensembl"/>
</dbReference>
<dbReference type="GO" id="GO:0050730">
    <property type="term" value="P:regulation of peptidyl-tyrosine phosphorylation"/>
    <property type="evidence" value="ECO:0000314"/>
    <property type="project" value="UniProtKB"/>
</dbReference>
<dbReference type="GO" id="GO:0034446">
    <property type="term" value="P:substrate adhesion-dependent cell spreading"/>
    <property type="evidence" value="ECO:0007669"/>
    <property type="project" value="Ensembl"/>
</dbReference>
<dbReference type="CDD" id="cd10425">
    <property type="entry name" value="Ephrin-A_Ectodomain"/>
    <property type="match status" value="1"/>
</dbReference>
<dbReference type="FunFam" id="2.60.40.420:FF:000017">
    <property type="entry name" value="ephrin-A1"/>
    <property type="match status" value="1"/>
</dbReference>
<dbReference type="Gene3D" id="2.60.40.420">
    <property type="entry name" value="Cupredoxins - blue copper proteins"/>
    <property type="match status" value="1"/>
</dbReference>
<dbReference type="InterPro" id="IPR008972">
    <property type="entry name" value="Cupredoxin"/>
</dbReference>
<dbReference type="InterPro" id="IPR031328">
    <property type="entry name" value="Ephrin"/>
</dbReference>
<dbReference type="InterPro" id="IPR034252">
    <property type="entry name" value="Ephrin-A_Ecto"/>
</dbReference>
<dbReference type="InterPro" id="IPR019765">
    <property type="entry name" value="Ephrin_CS"/>
</dbReference>
<dbReference type="InterPro" id="IPR001799">
    <property type="entry name" value="Ephrin_RBD"/>
</dbReference>
<dbReference type="PANTHER" id="PTHR11304">
    <property type="entry name" value="EPHRIN"/>
    <property type="match status" value="1"/>
</dbReference>
<dbReference type="PANTHER" id="PTHR11304:SF19">
    <property type="entry name" value="EPHRIN-A1"/>
    <property type="match status" value="1"/>
</dbReference>
<dbReference type="Pfam" id="PF00812">
    <property type="entry name" value="Ephrin"/>
    <property type="match status" value="1"/>
</dbReference>
<dbReference type="PRINTS" id="PR01347">
    <property type="entry name" value="EPHRIN"/>
</dbReference>
<dbReference type="SUPFAM" id="SSF49503">
    <property type="entry name" value="Cupredoxins"/>
    <property type="match status" value="1"/>
</dbReference>
<dbReference type="PROSITE" id="PS01299">
    <property type="entry name" value="EPHRIN_RBD_1"/>
    <property type="match status" value="1"/>
</dbReference>
<dbReference type="PROSITE" id="PS51551">
    <property type="entry name" value="EPHRIN_RBD_2"/>
    <property type="match status" value="1"/>
</dbReference>
<accession>P52793</accession>
<accession>P97331</accession>
<protein>
    <recommendedName>
        <fullName>Ephrin-A1</fullName>
    </recommendedName>
    <alternativeName>
        <fullName>EPH-related receptor tyrosine kinase ligand 1</fullName>
        <shortName>LERK-1</shortName>
    </alternativeName>
    <alternativeName>
        <fullName>Immediate early response protein B61</fullName>
    </alternativeName>
    <component>
        <recommendedName>
            <fullName>Ephrin-A1, secreted form</fullName>
        </recommendedName>
    </component>
</protein>